<sequence length="440" mass="47435">MGALLALLDPVQPTRAPDCGGILTPLGLSYLAEVSKPHAEVVLRQDLMPKEPQTCSLAPWSPAGTELPAVKVADLWLSVIPEAGLRLGIEVELRIAPLHTVPMPVRISIRADLHVDMGPDGNLQLLTSACRPTVQAQSTREAESKSSRSILDKVVDVDKLCLDVSKLLLFPNEQLMSLTALFPVTPNCQLQYLALAAPVFSKQGIALSLQTTFQVAGAVVPVPVSPVPFSMPELASTSTSHLILALSEHFYTSLYFTLERAGAFNMTIPSMLTTATLAQKITQVGSLYHEDLPITLSAALRSSPRVVLEEGRAALKLFLTVHIGAGSPDFQSFLSVSADVTRAGLQLSVSDTRMMISTAVIEDAELSLAASNVGLVRAALLEELFLAPVCQQVPAWMDDVLREGVHLPHMSHFTYTDVNVVVHKDYVLVPCKLKLRSTMA</sequence>
<feature type="chain" id="PRO_0000389230" description="Protein TENP">
    <location>
        <begin position="1"/>
        <end position="440"/>
    </location>
</feature>
<feature type="sequence conflict" description="In Ref. 2; AA sequence." evidence="4" ref="2">
    <original>I</original>
    <variation>V</variation>
    <location>
        <position position="80"/>
    </location>
</feature>
<feature type="sequence conflict" description="In Ref. 2; AA sequence." evidence="4" ref="2">
    <original>I</original>
    <variation>V</variation>
    <location>
        <position position="95"/>
    </location>
</feature>
<feature type="sequence conflict" description="In Ref. 2; AA sequence." evidence="4" ref="2">
    <original>T</original>
    <variation>A</variation>
    <location>
        <position position="100"/>
    </location>
</feature>
<name>TENP_CHICK</name>
<dbReference type="EMBL" id="AF029841">
    <property type="protein sequence ID" value="AAC14583.1"/>
    <property type="molecule type" value="mRNA"/>
</dbReference>
<dbReference type="RefSeq" id="NP_990357.1">
    <property type="nucleotide sequence ID" value="NM_205026.1"/>
</dbReference>
<dbReference type="SMR" id="O42273"/>
<dbReference type="FunCoup" id="O42273">
    <property type="interactions" value="10"/>
</dbReference>
<dbReference type="STRING" id="9031.ENSGALP00000038462"/>
<dbReference type="PaxDb" id="9031-ENSGALP00000038462"/>
<dbReference type="KEGG" id="gga:395882"/>
<dbReference type="VEuPathDB" id="HostDB:geneid_395882"/>
<dbReference type="eggNOG" id="KOG4160">
    <property type="taxonomic scope" value="Eukaryota"/>
</dbReference>
<dbReference type="InParanoid" id="O42273"/>
<dbReference type="PhylomeDB" id="O42273"/>
<dbReference type="Proteomes" id="UP000000539">
    <property type="component" value="Unassembled WGS sequence"/>
</dbReference>
<dbReference type="GO" id="GO:0016020">
    <property type="term" value="C:membrane"/>
    <property type="evidence" value="ECO:0000314"/>
    <property type="project" value="AgBase"/>
</dbReference>
<dbReference type="GO" id="GO:0008289">
    <property type="term" value="F:lipid binding"/>
    <property type="evidence" value="ECO:0007669"/>
    <property type="project" value="InterPro"/>
</dbReference>
<dbReference type="GO" id="GO:0051412">
    <property type="term" value="P:response to corticosterone"/>
    <property type="evidence" value="ECO:0000314"/>
    <property type="project" value="AgBase"/>
</dbReference>
<dbReference type="CDD" id="cd00025">
    <property type="entry name" value="BPI1"/>
    <property type="match status" value="1"/>
</dbReference>
<dbReference type="CDD" id="cd00026">
    <property type="entry name" value="BPI2"/>
    <property type="match status" value="1"/>
</dbReference>
<dbReference type="FunFam" id="3.15.20.10:FF:000010">
    <property type="entry name" value="Protein TENP"/>
    <property type="match status" value="1"/>
</dbReference>
<dbReference type="Gene3D" id="3.15.20.10">
    <property type="entry name" value="Bactericidal permeability-increasing protein, domain 2"/>
    <property type="match status" value="1"/>
</dbReference>
<dbReference type="InterPro" id="IPR017943">
    <property type="entry name" value="Bactericidal_perm-incr_a/b_dom"/>
</dbReference>
<dbReference type="InterPro" id="IPR051660">
    <property type="entry name" value="BPI_fold-BPI/LBP"/>
</dbReference>
<dbReference type="InterPro" id="IPR001124">
    <property type="entry name" value="Lipid-bd_serum_glycop_C"/>
</dbReference>
<dbReference type="PANTHER" id="PTHR46019:SF4">
    <property type="entry name" value="BPI FOLD-CONTAINING FAMILY B MEMBER 4"/>
    <property type="match status" value="1"/>
</dbReference>
<dbReference type="PANTHER" id="PTHR46019">
    <property type="entry name" value="BPI FOLD-CONTAINING FAMILY B MEMBER 4-RELATED"/>
    <property type="match status" value="1"/>
</dbReference>
<dbReference type="Pfam" id="PF02886">
    <property type="entry name" value="LBP_BPI_CETP_C"/>
    <property type="match status" value="1"/>
</dbReference>
<dbReference type="SMART" id="SM00329">
    <property type="entry name" value="BPI2"/>
    <property type="match status" value="1"/>
</dbReference>
<dbReference type="SUPFAM" id="SSF55394">
    <property type="entry name" value="Bactericidal permeability-increasing protein, BPI"/>
    <property type="match status" value="1"/>
</dbReference>
<comment type="function">
    <text evidence="2">May play a role in the developmental transition from cell proliferation to cell differentiation during neurogenesis.</text>
</comment>
<comment type="tissue specificity">
    <text evidence="1 2">Expressed in developing retina and brain, but not in heart, liver or kidney. In brain, located in a narrow strip in the boundary between the ventricular zone (consisting of proliferating cells) and the intermediate zone (consisting of postmitotic, differentiating cells). Expressed in all major regions of the developing brain, including the myelencephalon, the mesencephalon, the telencephalon and the diencephalon. In the developing retina, expression is scattered across the retinal neural epithelium (PubMed:9514522). Expressed in egg white (at protein level). Expressed in the magnum of the oviduct (at protein level) (PubMed:25436390).</text>
</comment>
<comment type="developmental stage">
    <text evidence="2">In brain, not abundant during the early stages of neurogenesis. Expression increases during cytogenesis followed by a rapid decrease towards the end of cytogenesis. Undetectable at 16 dpc. In retina, expression is detected at 4 dpc and 6 dpc, and becomes scarce by 8 dpc. Not detected in the mature retina.</text>
</comment>
<comment type="induction">
    <text evidence="1">Down-regulated by dietary stress. Significantly decreased expression between days 0 to 5 in egg whites of eggs laid by corticosterone-fed hens (at protein level). Decreased expression at day 14 in the magnum of the oviduct in the corticosterone-fed laying hens.</text>
</comment>
<reference evidence="4 5" key="1">
    <citation type="journal article" date="1998" name="J. Neurobiol.">
        <title>Identification and characterization of tenp, a gene transiently expressed before overt cell differentiation during neurogenesis.</title>
        <authorList>
            <person name="Yan R.-T."/>
            <person name="Wang S.-Z."/>
        </authorList>
    </citation>
    <scope>NUCLEOTIDE SEQUENCE [MRNA]</scope>
    <scope>PUTATIVE FUNCTION</scope>
    <scope>TISSUE SPECIFICITY</scope>
    <scope>DEVELOPMENTAL STAGE</scope>
    <source>
        <strain evidence="5">White leghorn</strain>
        <tissue evidence="2">Embryonic brain</tissue>
    </source>
</reference>
<reference key="2">
    <citation type="journal article" date="2014" name="J. Agric. Food Chem.">
        <title>Differential abundance of egg white proteins in laying hens treated with corticosterone.</title>
        <authorList>
            <person name="Kim J."/>
            <person name="Choi Y.H."/>
        </authorList>
    </citation>
    <scope>PROTEIN SEQUENCE OF 1-16; 15-45; 71-87; 86-95; 94-107; 280-302; 305-313; 353-378 AND 377-403</scope>
    <scope>TISSUE SPECIFICITY</scope>
    <scope>INDUCTION</scope>
    <scope>IDENTIFICATION BY MASS SPECTROMETRY</scope>
    <source>
        <tissue evidence="3">Egg white</tissue>
    </source>
</reference>
<proteinExistence type="evidence at protein level"/>
<evidence type="ECO:0000269" key="1">
    <source>
    </source>
</evidence>
<evidence type="ECO:0000269" key="2">
    <source>
    </source>
</evidence>
<evidence type="ECO:0000303" key="3">
    <source>
    </source>
</evidence>
<evidence type="ECO:0000305" key="4"/>
<evidence type="ECO:0000312" key="5">
    <source>
        <dbReference type="EMBL" id="AAC14583.1"/>
    </source>
</evidence>
<keyword id="KW-0217">Developmental protein</keyword>
<keyword id="KW-0903">Direct protein sequencing</keyword>
<keyword id="KW-1185">Reference proteome</keyword>
<protein>
    <recommendedName>
        <fullName>Protein TENP</fullName>
    </recommendedName>
</protein>
<gene>
    <name type="primary">TENP</name>
</gene>
<accession>O42273</accession>
<organism>
    <name type="scientific">Gallus gallus</name>
    <name type="common">Chicken</name>
    <dbReference type="NCBI Taxonomy" id="9031"/>
    <lineage>
        <taxon>Eukaryota</taxon>
        <taxon>Metazoa</taxon>
        <taxon>Chordata</taxon>
        <taxon>Craniata</taxon>
        <taxon>Vertebrata</taxon>
        <taxon>Euteleostomi</taxon>
        <taxon>Archelosauria</taxon>
        <taxon>Archosauria</taxon>
        <taxon>Dinosauria</taxon>
        <taxon>Saurischia</taxon>
        <taxon>Theropoda</taxon>
        <taxon>Coelurosauria</taxon>
        <taxon>Aves</taxon>
        <taxon>Neognathae</taxon>
        <taxon>Galloanserae</taxon>
        <taxon>Galliformes</taxon>
        <taxon>Phasianidae</taxon>
        <taxon>Phasianinae</taxon>
        <taxon>Gallus</taxon>
    </lineage>
</organism>